<comment type="function">
    <text>Actins are highly conserved proteins that are involved in various types of cell motility and are ubiquitously expressed in all eukaryotic cells. Multiple isoforms are involved in various cellular functions such as cytoskeleton structure, cell mobility, chromosome movement and muscle contraction.</text>
</comment>
<comment type="catalytic activity">
    <reaction evidence="1">
        <text>ATP + H2O = ADP + phosphate + H(+)</text>
        <dbReference type="Rhea" id="RHEA:13065"/>
        <dbReference type="ChEBI" id="CHEBI:15377"/>
        <dbReference type="ChEBI" id="CHEBI:15378"/>
        <dbReference type="ChEBI" id="CHEBI:30616"/>
        <dbReference type="ChEBI" id="CHEBI:43474"/>
        <dbReference type="ChEBI" id="CHEBI:456216"/>
    </reaction>
</comment>
<comment type="interaction">
    <interactant intactId="EBI-7195234">
        <id>P07830</id>
    </interactant>
    <interactant intactId="EBI-351506">
        <id>P06396</id>
        <label>GSN</label>
    </interactant>
    <organismsDiffer>true</organismsDiffer>
    <experiments>4</experiments>
</comment>
<comment type="interaction">
    <interactant intactId="EBI-7195234">
        <id>P07830</id>
    </interactant>
    <interactant intactId="EBI-713780">
        <id>P07737</id>
        <label>PFN1</label>
    </interactant>
    <organismsDiffer>true</organismsDiffer>
    <experiments>3</experiments>
</comment>
<comment type="subcellular location">
    <subcellularLocation>
        <location>Cytoplasm</location>
        <location>Cytoskeleton</location>
    </subcellularLocation>
</comment>
<comment type="similarity">
    <text evidence="4">Belongs to the actin family.</text>
</comment>
<keyword id="KW-0002">3D-structure</keyword>
<keyword id="KW-0067">ATP-binding</keyword>
<keyword id="KW-0963">Cytoplasm</keyword>
<keyword id="KW-0206">Cytoskeleton</keyword>
<keyword id="KW-0903">Direct protein sequencing</keyword>
<keyword id="KW-0378">Hydrolase</keyword>
<keyword id="KW-0547">Nucleotide-binding</keyword>
<keyword id="KW-0597">Phosphoprotein</keyword>
<keyword id="KW-1185">Reference proteome</keyword>
<proteinExistence type="evidence at protein level"/>
<reference key="1">
    <citation type="journal article" date="1985" name="J. Mol. Biol.">
        <title>Organization of the actin multigene family of Dictyostelium discoideum and analysis of variability in the protein coding regions.</title>
        <authorList>
            <person name="Romans P."/>
            <person name="Firtel R.A."/>
        </authorList>
    </citation>
    <scope>NUCLEOTIDE SEQUENCE [GENOMIC DNA] (ACT8 AND ACT12)</scope>
</reference>
<reference key="2">
    <citation type="journal article" date="1986" name="Mol. Cell. Biol.">
        <title>Developmental regulation of Dictyostelium discoideum actin gene fusions carried on low-copy and high-copy transformation vectors.</title>
        <authorList>
            <person name="Knecht D.A."/>
            <person name="Cohen S.M."/>
            <person name="Loomis W.F."/>
            <person name="Lodish H.F."/>
        </authorList>
    </citation>
    <scope>NUCLEOTIDE SEQUENCE [GENOMIC DNA]</scope>
</reference>
<reference key="3">
    <citation type="journal article" date="2002" name="Nature">
        <title>Sequence and analysis of chromosome 2 of Dictyostelium discoideum.</title>
        <authorList>
            <person name="Gloeckner G."/>
            <person name="Eichinger L."/>
            <person name="Szafranski K."/>
            <person name="Pachebat J.A."/>
            <person name="Bankier A.T."/>
            <person name="Dear P.H."/>
            <person name="Lehmann R."/>
            <person name="Baumgart C."/>
            <person name="Parra G."/>
            <person name="Abril J.F."/>
            <person name="Guigo R."/>
            <person name="Kumpf K."/>
            <person name="Tunggal B."/>
            <person name="Cox E.C."/>
            <person name="Quail M.A."/>
            <person name="Platzer M."/>
            <person name="Rosenthal A."/>
            <person name="Noegel A.A."/>
        </authorList>
    </citation>
    <scope>NUCLEOTIDE SEQUENCE [LARGE SCALE GENOMIC DNA]</scope>
    <source>
        <strain>AX4</strain>
    </source>
</reference>
<reference key="4">
    <citation type="journal article" date="2005" name="Nature">
        <title>The genome of the social amoeba Dictyostelium discoideum.</title>
        <authorList>
            <person name="Eichinger L."/>
            <person name="Pachebat J.A."/>
            <person name="Gloeckner G."/>
            <person name="Rajandream M.A."/>
            <person name="Sucgang R."/>
            <person name="Berriman M."/>
            <person name="Song J."/>
            <person name="Olsen R."/>
            <person name="Szafranski K."/>
            <person name="Xu Q."/>
            <person name="Tunggal B."/>
            <person name="Kummerfeld S."/>
            <person name="Madera M."/>
            <person name="Konfortov B.A."/>
            <person name="Rivero F."/>
            <person name="Bankier A.T."/>
            <person name="Lehmann R."/>
            <person name="Hamlin N."/>
            <person name="Davies R."/>
            <person name="Gaudet P."/>
            <person name="Fey P."/>
            <person name="Pilcher K."/>
            <person name="Chen G."/>
            <person name="Saunders D."/>
            <person name="Sodergren E.J."/>
            <person name="Davis P."/>
            <person name="Kerhornou A."/>
            <person name="Nie X."/>
            <person name="Hall N."/>
            <person name="Anjard C."/>
            <person name="Hemphill L."/>
            <person name="Bason N."/>
            <person name="Farbrother P."/>
            <person name="Desany B."/>
            <person name="Just E."/>
            <person name="Morio T."/>
            <person name="Rost R."/>
            <person name="Churcher C.M."/>
            <person name="Cooper J."/>
            <person name="Haydock S."/>
            <person name="van Driessche N."/>
            <person name="Cronin A."/>
            <person name="Goodhead I."/>
            <person name="Muzny D.M."/>
            <person name="Mourier T."/>
            <person name="Pain A."/>
            <person name="Lu M."/>
            <person name="Harper D."/>
            <person name="Lindsay R."/>
            <person name="Hauser H."/>
            <person name="James K.D."/>
            <person name="Quiles M."/>
            <person name="Madan Babu M."/>
            <person name="Saito T."/>
            <person name="Buchrieser C."/>
            <person name="Wardroper A."/>
            <person name="Felder M."/>
            <person name="Thangavelu M."/>
            <person name="Johnson D."/>
            <person name="Knights A."/>
            <person name="Loulseged H."/>
            <person name="Mungall K.L."/>
            <person name="Oliver K."/>
            <person name="Price C."/>
            <person name="Quail M.A."/>
            <person name="Urushihara H."/>
            <person name="Hernandez J."/>
            <person name="Rabbinowitsch E."/>
            <person name="Steffen D."/>
            <person name="Sanders M."/>
            <person name="Ma J."/>
            <person name="Kohara Y."/>
            <person name="Sharp S."/>
            <person name="Simmonds M.N."/>
            <person name="Spiegler S."/>
            <person name="Tivey A."/>
            <person name="Sugano S."/>
            <person name="White B."/>
            <person name="Walker D."/>
            <person name="Woodward J.R."/>
            <person name="Winckler T."/>
            <person name="Tanaka Y."/>
            <person name="Shaulsky G."/>
            <person name="Schleicher M."/>
            <person name="Weinstock G.M."/>
            <person name="Rosenthal A."/>
            <person name="Cox E.C."/>
            <person name="Chisholm R.L."/>
            <person name="Gibbs R.A."/>
            <person name="Loomis W.F."/>
            <person name="Platzer M."/>
            <person name="Kay R.R."/>
            <person name="Williams J.G."/>
            <person name="Dear P.H."/>
            <person name="Noegel A.A."/>
            <person name="Barrell B.G."/>
            <person name="Kuspa A."/>
        </authorList>
    </citation>
    <scope>NUCLEOTIDE SEQUENCE [LARGE SCALE GENOMIC DNA]</scope>
    <source>
        <strain>AX4</strain>
    </source>
</reference>
<reference key="5">
    <citation type="journal article" date="1988" name="Prog. Inorg. Biochem. Biophys.">
        <title>A new Dictyostelium discoideum actin gene.</title>
        <authorList>
            <person name="Zhou S."/>
        </authorList>
    </citation>
    <scope>NUCLEOTIDE SEQUENCE [GENOMIC DNA] OF 1-260 (ACT15)</scope>
    <source>
        <strain>79A</strain>
    </source>
</reference>
<reference key="6">
    <citation type="journal article" date="1979" name="Proc. Natl. Acad. Sci. U.S.A.">
        <title>Unusual nucleotide sequences at the 5' end of actin genes in Dictyostelium discoideum.</title>
        <authorList>
            <person name="Firtel R.A."/>
            <person name="Timm R."/>
            <person name="Kimmel A.R."/>
            <person name="McKeown M."/>
        </authorList>
    </citation>
    <scope>NUCLEOTIDE SEQUENCE [GENOMIC DNA / MRNA] OF 1-68 (ACT2; ACT5; ACT7; ACT14 AND ACT16)</scope>
</reference>
<reference key="7">
    <citation type="journal article" date="1981" name="Cell">
        <title>Differential expression and 5' end mapping of actin genes in Dictyostelium.</title>
        <authorList>
            <person name="McKeown M."/>
            <person name="Firtel R.A."/>
        </authorList>
    </citation>
    <scope>NUCLEOTIDE SEQUENCE [GENOMIC DNA] OF 1-9 (ACT8)</scope>
</reference>
<reference key="8">
    <citation type="journal article" date="1982" name="Cell">
        <title>Cell-type-specific actin mRNA populations in Dictyostelium discoideum.</title>
        <authorList>
            <person name="Tsang A.S."/>
            <person name="Mahbubani H.M."/>
            <person name="Williams J.G."/>
        </authorList>
    </citation>
    <scope>NUCLEOTIDE SEQUENCE [GENOMIC DNA / MRNA] OF 1-9 (ACT4)</scope>
</reference>
<reference key="9">
    <citation type="journal article" date="1982" name="Cold Spring Harb. Symp. Quant. Biol.">
        <title>Actin multigene family of Dictyostelium.</title>
        <authorList>
            <person name="McKeown M."/>
            <person name="Firtel R.A."/>
        </authorList>
    </citation>
    <scope>NUCLEOTIDE SEQUENCE [GENOMIC DNA] OF 1-8 (ACT6 AND ACT8)</scope>
</reference>
<reference key="10">
    <citation type="journal article" date="1980" name="Nature">
        <title>Vegetative Dictyostelium cells containing 17 actin genes express a single major actin.</title>
        <authorList>
            <person name="Vandekerckhove J."/>
            <person name="Weber K."/>
        </authorList>
    </citation>
    <scope>PROTEIN SEQUENCE OF 2-376</scope>
</reference>
<reference key="11">
    <citation type="journal article" date="1990" name="J. Biol. Chem.">
        <title>Expression of actin in Escherichia coli. Aggregation, solubilization, and functional analysis.</title>
        <authorList>
            <person name="Frankel S."/>
            <person name="Condeelis J."/>
            <person name="Leinwand L."/>
        </authorList>
    </citation>
    <scope>PROTEIN SEQUENCE OF 120-133</scope>
</reference>
<reference key="12">
    <citation type="journal article" date="1981" name="J. Mol. Biol.">
        <title>Evidence for sub-families of actin genes in Dictyostelium as determined by comparisons of 3' end sequences.</title>
        <authorList>
            <person name="McKeown M."/>
            <person name="Firtel R.A."/>
        </authorList>
    </citation>
    <scope>NUCLEOTIDE SEQUENCE [GENOMIC DNA / MRNA] OF 289-376 (ACT2; ACT5; ACT8 AND ACT15)</scope>
    <source>
        <strain>AX3</strain>
    </source>
</reference>
<reference key="13">
    <citation type="journal article" date="1995" name="FEBS Lett.">
        <title>Stress-induced tyrosine phosphorylation of actin in Dictyostelium cells and localization of the phosphorylation site to tyrosine-53 adjacent to the DNase I binding loop.</title>
        <authorList>
            <person name="Jungbluth A."/>
            <person name="Eckerskorn C."/>
            <person name="Gerisch G."/>
            <person name="Lottspeich F."/>
            <person name="Stocker S."/>
            <person name="Schweiger A."/>
        </authorList>
    </citation>
    <scope>PHOSPHORYLATION AT TYR-54</scope>
</reference>
<reference key="14">
    <citation type="journal article" date="1993" name="Nature">
        <title>Structure of gelsolin segment 1-actin complex and the mechanism of filament severing.</title>
        <authorList>
            <person name="McLaughlin P.J."/>
            <person name="Gooch J.T."/>
            <person name="Mannherz H.-G."/>
            <person name="Weeds A.G."/>
        </authorList>
    </citation>
    <scope>X-RAY CRYSTALLOGRAPHY (2.4 ANGSTROMS) IN COMPLEX WITH GELSOLIN AND ATP</scope>
</reference>
<reference key="15">
    <citation type="journal article" date="2003" name="Proc. Natl. Acad. Sci. U.S.A.">
        <title>The structure of nonvertebrate actin: implications for the ATP hydrolytic mechanism.</title>
        <authorList>
            <person name="Vorobiev S."/>
            <person name="Strokopytov B."/>
            <person name="Drubin D.G."/>
            <person name="Frieden C."/>
            <person name="Ono S."/>
            <person name="Condeelis J."/>
            <person name="Rubenstein P.A."/>
            <person name="Almo S.C."/>
        </authorList>
    </citation>
    <scope>X-RAY CRYSTALLOGRAPHY (1.8 ANGSTROMS) IN COMPLEX WITH GELSOLIN AND ATP</scope>
</reference>
<dbReference type="EC" id="3.6.4.-" evidence="1"/>
<dbReference type="EMBL" id="X03281">
    <property type="protein sequence ID" value="CAA27031.1"/>
    <property type="molecule type" value="Genomic_DNA"/>
</dbReference>
<dbReference type="EMBL" id="X03282">
    <property type="protein sequence ID" value="CAA27032.1"/>
    <property type="molecule type" value="Genomic_DNA"/>
</dbReference>
<dbReference type="EMBL" id="M14146">
    <property type="protein sequence ID" value="AAA33145.1"/>
    <property type="molecule type" value="Genomic_DNA"/>
</dbReference>
<dbReference type="EMBL" id="AAFI02000005">
    <property type="protein sequence ID" value="EAL71967.1"/>
    <property type="molecule type" value="Genomic_DNA"/>
</dbReference>
<dbReference type="EMBL" id="AAFI02000008">
    <property type="protein sequence ID" value="EAL71184.1"/>
    <property type="molecule type" value="Genomic_DNA"/>
</dbReference>
<dbReference type="EMBL" id="AAFI02000008">
    <property type="protein sequence ID" value="EAL71276.1"/>
    <property type="molecule type" value="Genomic_DNA"/>
</dbReference>
<dbReference type="EMBL" id="AAFI02000012">
    <property type="protein sequence ID" value="EAL69957.1"/>
    <property type="molecule type" value="Genomic_DNA"/>
</dbReference>
<dbReference type="EMBL" id="AAFI02000012">
    <property type="protein sequence ID" value="EAL69959.1"/>
    <property type="molecule type" value="Genomic_DNA"/>
</dbReference>
<dbReference type="EMBL" id="AAFI02000012">
    <property type="protein sequence ID" value="EAL69960.1"/>
    <property type="molecule type" value="Genomic_DNA"/>
</dbReference>
<dbReference type="EMBL" id="AAFI02000012">
    <property type="protein sequence ID" value="EAL69961.1"/>
    <property type="molecule type" value="Genomic_DNA"/>
</dbReference>
<dbReference type="EMBL" id="AAFI02000012">
    <property type="protein sequence ID" value="EAL70035.1"/>
    <property type="molecule type" value="Genomic_DNA"/>
</dbReference>
<dbReference type="EMBL" id="AAFI02000012">
    <property type="protein sequence ID" value="EAL70173.1"/>
    <property type="molecule type" value="Genomic_DNA"/>
</dbReference>
<dbReference type="EMBL" id="AAFI02000012">
    <property type="protein sequence ID" value="EAL70192.1"/>
    <property type="molecule type" value="Genomic_DNA"/>
</dbReference>
<dbReference type="EMBL" id="AAFI02000012">
    <property type="protein sequence ID" value="EAL70193.1"/>
    <property type="molecule type" value="Genomic_DNA"/>
</dbReference>
<dbReference type="EMBL" id="AAFI02000012">
    <property type="protein sequence ID" value="EAL70256.1"/>
    <property type="molecule type" value="Genomic_DNA"/>
</dbReference>
<dbReference type="EMBL" id="AAFI02000037">
    <property type="protein sequence ID" value="EAL67074.1"/>
    <property type="molecule type" value="Genomic_DNA"/>
</dbReference>
<dbReference type="EMBL" id="AAFI02000126">
    <property type="protein sequence ID" value="EAL62963.1"/>
    <property type="molecule type" value="Genomic_DNA"/>
</dbReference>
<dbReference type="EMBL" id="AAFI02000129">
    <property type="protein sequence ID" value="EAL62918.1"/>
    <property type="molecule type" value="Genomic_DNA"/>
</dbReference>
<dbReference type="EMBL" id="AAFI02000142">
    <property type="protein sequence ID" value="EAL62666.1"/>
    <property type="molecule type" value="Genomic_DNA"/>
</dbReference>
<dbReference type="EMBL" id="AAFI02000148">
    <property type="protein sequence ID" value="EAL62543.1"/>
    <property type="molecule type" value="Genomic_DNA"/>
</dbReference>
<dbReference type="EMBL" id="U25660">
    <property type="protein sequence ID" value="AAA74186.1"/>
    <property type="molecule type" value="Genomic_DNA"/>
</dbReference>
<dbReference type="EMBL" id="V00183">
    <property type="protein sequence ID" value="CAA23479.1"/>
    <property type="molecule type" value="Genomic_DNA"/>
</dbReference>
<dbReference type="EMBL" id="V00186">
    <property type="protein sequence ID" value="CAA23482.1"/>
    <property type="molecule type" value="Genomic_DNA"/>
</dbReference>
<dbReference type="EMBL" id="V00188">
    <property type="protein sequence ID" value="CAA23484.1"/>
    <property type="molecule type" value="mRNA"/>
</dbReference>
<dbReference type="EMBL" id="J01267">
    <property type="protein sequence ID" value="AAA33147.1"/>
    <property type="molecule type" value="Genomic_DNA"/>
</dbReference>
<dbReference type="EMBL" id="J01273">
    <property type="protein sequence ID" value="AAA33151.1"/>
    <property type="molecule type" value="Genomic_DNA"/>
</dbReference>
<dbReference type="EMBL" id="J01274">
    <property type="protein sequence ID" value="AAA33153.1"/>
    <property type="molecule type" value="Genomic_DNA"/>
</dbReference>
<dbReference type="EMBL" id="J01276">
    <property type="protein sequence ID" value="AAA51618.1"/>
    <property type="molecule type" value="Genomic_DNA"/>
</dbReference>
<dbReference type="EMBL" id="J01279">
    <property type="protein sequence ID" value="AAA33146.1"/>
    <property type="molecule type" value="Genomic_DNA"/>
</dbReference>
<dbReference type="EMBL" id="J01265">
    <property type="protein sequence ID" value="AAA33158.1"/>
    <property type="molecule type" value="mRNA"/>
</dbReference>
<dbReference type="EMBL" id="J01270">
    <property type="protein sequence ID" value="AAA33159.1"/>
    <property type="molecule type" value="mRNA"/>
</dbReference>
<dbReference type="EMBL" id="J01272">
    <property type="protein sequence ID" value="AAA33160.1"/>
    <property type="molecule type" value="Genomic_DNA"/>
</dbReference>
<dbReference type="EMBL" id="K02954">
    <property type="protein sequence ID" value="AAA33148.1"/>
    <property type="molecule type" value="Genomic_DNA"/>
</dbReference>
<dbReference type="EMBL" id="K02958">
    <property type="protein sequence ID" value="AAA33152.1"/>
    <property type="molecule type" value="Genomic_DNA"/>
</dbReference>
<dbReference type="EMBL" id="K02960">
    <property type="protein sequence ID" value="AAA51619.1"/>
    <property type="molecule type" value="Genomic_DNA"/>
</dbReference>
<dbReference type="EMBL" id="J01278">
    <property type="protein sequence ID" value="AAA33157.1"/>
    <property type="molecule type" value="mRNA"/>
</dbReference>
<dbReference type="PIR" id="A25084">
    <property type="entry name" value="A25084"/>
</dbReference>
<dbReference type="PIR" id="A39239">
    <property type="entry name" value="A39239"/>
</dbReference>
<dbReference type="PIR" id="A93223">
    <property type="entry name" value="ATDO"/>
</dbReference>
<dbReference type="PIR" id="B23412">
    <property type="entry name" value="B23412"/>
</dbReference>
<dbReference type="RefSeq" id="XP_636088.1">
    <property type="nucleotide sequence ID" value="XM_630996.1"/>
</dbReference>
<dbReference type="RefSeq" id="XP_636169.1">
    <property type="nucleotide sequence ID" value="XM_631077.1"/>
</dbReference>
<dbReference type="RefSeq" id="XP_636425.1">
    <property type="nucleotide sequence ID" value="XM_631333.1"/>
</dbReference>
<dbReference type="RefSeq" id="XP_636507.1">
    <property type="nucleotide sequence ID" value="XM_631415.1"/>
</dbReference>
<dbReference type="RefSeq" id="XP_641146.1">
    <property type="nucleotide sequence ID" value="XM_636054.1"/>
</dbReference>
<dbReference type="RefSeq" id="XP_643986.1">
    <property type="nucleotide sequence ID" value="XM_638894.1"/>
</dbReference>
<dbReference type="RefSeq" id="XP_643988.1">
    <property type="nucleotide sequence ID" value="XM_638896.1"/>
</dbReference>
<dbReference type="RefSeq" id="XP_643989.1">
    <property type="nucleotide sequence ID" value="XM_638897.1"/>
</dbReference>
<dbReference type="RefSeq" id="XP_643990.1">
    <property type="nucleotide sequence ID" value="XM_638898.1"/>
</dbReference>
<dbReference type="RefSeq" id="XP_644132.1">
    <property type="nucleotide sequence ID" value="XM_639040.1"/>
</dbReference>
<dbReference type="RefSeq" id="XP_644146.1">
    <property type="nucleotide sequence ID" value="XM_639054.1"/>
</dbReference>
<dbReference type="RefSeq" id="XP_644157.1">
    <property type="nucleotide sequence ID" value="XM_639065.1"/>
</dbReference>
<dbReference type="RefSeq" id="XP_644244.1">
    <property type="nucleotide sequence ID" value="XM_639152.1"/>
</dbReference>
<dbReference type="RefSeq" id="XP_644246.1">
    <property type="nucleotide sequence ID" value="XM_639154.1"/>
</dbReference>
<dbReference type="RefSeq" id="XP_645099.1">
    <property type="nucleotide sequence ID" value="XM_640007.1"/>
</dbReference>
<dbReference type="RefSeq" id="XP_645262.1">
    <property type="nucleotide sequence ID" value="XM_640170.1"/>
</dbReference>
<dbReference type="RefSeq" id="XP_646688.1">
    <property type="nucleotide sequence ID" value="XM_641596.1"/>
</dbReference>
<dbReference type="PDB" id="1C0F">
    <property type="method" value="X-ray"/>
    <property type="resolution" value="2.40 A"/>
    <property type="chains" value="A=2-376"/>
</dbReference>
<dbReference type="PDB" id="1C0G">
    <property type="method" value="X-ray"/>
    <property type="resolution" value="2.00 A"/>
    <property type="chains" value="A=2-376"/>
</dbReference>
<dbReference type="PDB" id="1DEJ">
    <property type="method" value="X-ray"/>
    <property type="resolution" value="2.40 A"/>
    <property type="chains" value="A=2-376"/>
</dbReference>
<dbReference type="PDB" id="1NLV">
    <property type="method" value="X-ray"/>
    <property type="resolution" value="1.80 A"/>
    <property type="chains" value="A=2-376"/>
</dbReference>
<dbReference type="PDB" id="1NM1">
    <property type="method" value="X-ray"/>
    <property type="resolution" value="1.80 A"/>
    <property type="chains" value="A=2-376"/>
</dbReference>
<dbReference type="PDB" id="1NMD">
    <property type="method" value="X-ray"/>
    <property type="resolution" value="1.90 A"/>
    <property type="chains" value="A=2-376"/>
</dbReference>
<dbReference type="PDB" id="3A5L">
    <property type="method" value="X-ray"/>
    <property type="resolution" value="2.40 A"/>
    <property type="chains" value="C=2-376"/>
</dbReference>
<dbReference type="PDB" id="3A5M">
    <property type="method" value="X-ray"/>
    <property type="resolution" value="2.40 A"/>
    <property type="chains" value="C=2-376"/>
</dbReference>
<dbReference type="PDB" id="3A5N">
    <property type="method" value="X-ray"/>
    <property type="resolution" value="2.36 A"/>
    <property type="chains" value="C=2-376"/>
</dbReference>
<dbReference type="PDB" id="3A5O">
    <property type="method" value="X-ray"/>
    <property type="resolution" value="2.40 A"/>
    <property type="chains" value="C=2-376"/>
</dbReference>
<dbReference type="PDB" id="3CHW">
    <property type="method" value="X-ray"/>
    <property type="resolution" value="2.30 A"/>
    <property type="chains" value="A=2-376"/>
</dbReference>
<dbReference type="PDB" id="3CI5">
    <property type="method" value="X-ray"/>
    <property type="resolution" value="1.70 A"/>
    <property type="chains" value="A=2-376"/>
</dbReference>
<dbReference type="PDB" id="3CIP">
    <property type="method" value="X-ray"/>
    <property type="resolution" value="1.60 A"/>
    <property type="chains" value="A=2-376"/>
</dbReference>
<dbReference type="PDBsum" id="1C0F"/>
<dbReference type="PDBsum" id="1C0G"/>
<dbReference type="PDBsum" id="1DEJ"/>
<dbReference type="PDBsum" id="1NLV"/>
<dbReference type="PDBsum" id="1NM1"/>
<dbReference type="PDBsum" id="1NMD"/>
<dbReference type="PDBsum" id="3A5L"/>
<dbReference type="PDBsum" id="3A5M"/>
<dbReference type="PDBsum" id="3A5N"/>
<dbReference type="PDBsum" id="3A5O"/>
<dbReference type="PDBsum" id="3CHW"/>
<dbReference type="PDBsum" id="3CI5"/>
<dbReference type="PDBsum" id="3CIP"/>
<dbReference type="SMR" id="P07830"/>
<dbReference type="DIP" id="DIP-40989N"/>
<dbReference type="FunCoup" id="P07830">
    <property type="interactions" value="347"/>
</dbReference>
<dbReference type="IntAct" id="P07830">
    <property type="interactions" value="3"/>
</dbReference>
<dbReference type="MINT" id="P07830"/>
<dbReference type="STRING" id="44689.P07830"/>
<dbReference type="iPTMnet" id="P07830"/>
<dbReference type="PaxDb" id="44689-DDB0185015"/>
<dbReference type="ABCD" id="P07830">
    <property type="antibodies" value="1 sequenced antibody"/>
</dbReference>
<dbReference type="EnsemblProtists" id="EAL62543">
    <property type="protein sequence ID" value="EAL62543"/>
    <property type="gene ID" value="DDB_G0289663"/>
</dbReference>
<dbReference type="EnsemblProtists" id="EAL62666">
    <property type="protein sequence ID" value="EAL62666"/>
    <property type="gene ID" value="DDB_G0289553"/>
</dbReference>
<dbReference type="EnsemblProtists" id="EAL62918">
    <property type="protein sequence ID" value="EAL62918"/>
    <property type="gene ID" value="DDB_G0289005"/>
</dbReference>
<dbReference type="EnsemblProtists" id="EAL62963">
    <property type="protein sequence ID" value="EAL62963"/>
    <property type="gene ID" value="DDB_G0288879"/>
</dbReference>
<dbReference type="EnsemblProtists" id="EAL67074">
    <property type="protein sequence ID" value="EAL67074"/>
    <property type="gene ID" value="DDB_G0280545"/>
</dbReference>
<dbReference type="EnsemblProtists" id="EAL69957">
    <property type="protein sequence ID" value="EAL69957"/>
    <property type="gene ID" value="DDB_G0274129"/>
</dbReference>
<dbReference type="EnsemblProtists" id="EAL69959">
    <property type="protein sequence ID" value="EAL69959"/>
    <property type="gene ID" value="DDB_G0274133"/>
</dbReference>
<dbReference type="EnsemblProtists" id="EAL69960">
    <property type="protein sequence ID" value="EAL69960"/>
    <property type="gene ID" value="DDB_G0274135"/>
</dbReference>
<dbReference type="EnsemblProtists" id="EAL69961">
    <property type="protein sequence ID" value="EAL69961"/>
    <property type="gene ID" value="DDB_G0274137"/>
</dbReference>
<dbReference type="EnsemblProtists" id="EAL70035">
    <property type="protein sequence ID" value="EAL70035"/>
    <property type="gene ID" value="DDB_G0274285"/>
</dbReference>
<dbReference type="EnsemblProtists" id="EAL70173">
    <property type="protein sequence ID" value="EAL70173"/>
    <property type="gene ID" value="DDB_G0274561"/>
</dbReference>
<dbReference type="EnsemblProtists" id="EAL70192">
    <property type="protein sequence ID" value="EAL70192"/>
    <property type="gene ID" value="DDB_G0274599"/>
</dbReference>
<dbReference type="EnsemblProtists" id="EAL70193">
    <property type="protein sequence ID" value="EAL70193"/>
    <property type="gene ID" value="DDB_G0274601"/>
</dbReference>
<dbReference type="EnsemblProtists" id="EAL70256">
    <property type="protein sequence ID" value="EAL70256"/>
    <property type="gene ID" value="DDB_G0274727"/>
</dbReference>
<dbReference type="EnsemblProtists" id="EAL71184">
    <property type="protein sequence ID" value="EAL71184"/>
    <property type="gene ID" value="DDB_G0272520"/>
</dbReference>
<dbReference type="EnsemblProtists" id="EAL71276">
    <property type="protein sequence ID" value="EAL71276"/>
    <property type="gene ID" value="DDB_G0272248"/>
</dbReference>
<dbReference type="EnsemblProtists" id="EAL71967">
    <property type="protein sequence ID" value="EAL71967"/>
    <property type="gene ID" value="DDB_G0269234"/>
</dbReference>
<dbReference type="GeneID" id="8617663"/>
<dbReference type="GeneID" id="8618428"/>
<dbReference type="GeneID" id="8618493"/>
<dbReference type="GeneID" id="8619412"/>
<dbReference type="GeneID" id="8619414"/>
<dbReference type="GeneID" id="8619415"/>
<dbReference type="GeneID" id="8619416"/>
<dbReference type="GeneID" id="8619562"/>
<dbReference type="GeneID" id="8619575"/>
<dbReference type="GeneID" id="8619586"/>
<dbReference type="GeneID" id="8619672"/>
<dbReference type="GeneID" id="8619674"/>
<dbReference type="GeneID" id="8622703"/>
<dbReference type="GeneID" id="8626890"/>
<dbReference type="GeneID" id="8626916"/>
<dbReference type="GeneID" id="8627198"/>
<dbReference type="GeneID" id="8627300"/>
<dbReference type="KEGG" id="ddi:DDB_G0269234"/>
<dbReference type="KEGG" id="ddi:DDB_G0272248"/>
<dbReference type="KEGG" id="ddi:DDB_G0272520"/>
<dbReference type="KEGG" id="ddi:DDB_G0274129"/>
<dbReference type="KEGG" id="ddi:DDB_G0274133"/>
<dbReference type="KEGG" id="ddi:DDB_G0274135"/>
<dbReference type="KEGG" id="ddi:DDB_G0274137"/>
<dbReference type="KEGG" id="ddi:DDB_G0274285"/>
<dbReference type="KEGG" id="ddi:DDB_G0274561"/>
<dbReference type="KEGG" id="ddi:DDB_G0274599"/>
<dbReference type="KEGG" id="ddi:DDB_G0274601"/>
<dbReference type="KEGG" id="ddi:DDB_G0274727"/>
<dbReference type="KEGG" id="ddi:DDB_G0280545"/>
<dbReference type="KEGG" id="ddi:DDB_G0288879"/>
<dbReference type="KEGG" id="ddi:DDB_G0289005"/>
<dbReference type="KEGG" id="ddi:DDB_G0289553"/>
<dbReference type="KEGG" id="ddi:DDB_G0289663"/>
<dbReference type="dictyBase" id="DDB_G0289553">
    <property type="gene designation" value="act1"/>
</dbReference>
<dbReference type="dictyBase" id="DDB_G0288879">
    <property type="gene designation" value="act11"/>
</dbReference>
<dbReference type="dictyBase" id="DDB_G0274129">
    <property type="gene designation" value="act12"/>
</dbReference>
<dbReference type="dictyBase" id="DDB_G0274599">
    <property type="gene designation" value="act13"/>
</dbReference>
<dbReference type="dictyBase" id="DDB_G0274137">
    <property type="gene designation" value="act14"/>
</dbReference>
<dbReference type="dictyBase" id="DDB_G0272520">
    <property type="gene designation" value="act15"/>
</dbReference>
<dbReference type="dictyBase" id="DDB_G0272248">
    <property type="gene designation" value="act16"/>
</dbReference>
<dbReference type="dictyBase" id="DDB_G0274727">
    <property type="gene designation" value="act19"/>
</dbReference>
<dbReference type="dictyBase" id="DDB_G0274133">
    <property type="gene designation" value="act2"/>
</dbReference>
<dbReference type="dictyBase" id="DDB_G0274285">
    <property type="gene designation" value="act20"/>
</dbReference>
<dbReference type="dictyBase" id="DDB_G0274561">
    <property type="gene designation" value="act21"/>
</dbReference>
<dbReference type="dictyBase" id="DDB_G0289005">
    <property type="gene designation" value="act4"/>
</dbReference>
<dbReference type="dictyBase" id="DDB_G0289663">
    <property type="gene designation" value="act5"/>
</dbReference>
<dbReference type="dictyBase" id="DDB_G0274135">
    <property type="gene designation" value="act6"/>
</dbReference>
<dbReference type="dictyBase" id="DDB_G0280545">
    <property type="gene designation" value="act7"/>
</dbReference>
<dbReference type="dictyBase" id="DDB_G0269234">
    <property type="gene designation" value="act8"/>
</dbReference>
<dbReference type="dictyBase" id="DDB_G0274601">
    <property type="gene designation" value="act9"/>
</dbReference>
<dbReference type="VEuPathDB" id="AmoebaDB:DDB_G0272520"/>
<dbReference type="eggNOG" id="KOG0676">
    <property type="taxonomic scope" value="Eukaryota"/>
</dbReference>
<dbReference type="HOGENOM" id="CLU_027965_0_2_1"/>
<dbReference type="InParanoid" id="P07830"/>
<dbReference type="OMA" id="PXEREIV"/>
<dbReference type="PhylomeDB" id="P07830"/>
<dbReference type="EvolutionaryTrace" id="P07830"/>
<dbReference type="PRO" id="PR:P07830"/>
<dbReference type="Proteomes" id="UP000002195">
    <property type="component" value="Chromosome 1"/>
</dbReference>
<dbReference type="Proteomes" id="UP000002195">
    <property type="component" value="Chromosome 2"/>
</dbReference>
<dbReference type="Proteomes" id="UP000002195">
    <property type="component" value="Chromosome 3"/>
</dbReference>
<dbReference type="Proteomes" id="UP000002195">
    <property type="component" value="Chromosome 5"/>
</dbReference>
<dbReference type="GO" id="GO:0015629">
    <property type="term" value="C:actin cytoskeleton"/>
    <property type="evidence" value="ECO:0000314"/>
    <property type="project" value="dictyBase"/>
</dbReference>
<dbReference type="GO" id="GO:0005884">
    <property type="term" value="C:actin filament"/>
    <property type="evidence" value="ECO:0000314"/>
    <property type="project" value="dictyBase"/>
</dbReference>
<dbReference type="GO" id="GO:0005938">
    <property type="term" value="C:cell cortex"/>
    <property type="evidence" value="ECO:0000314"/>
    <property type="project" value="dictyBase"/>
</dbReference>
<dbReference type="GO" id="GO:0031252">
    <property type="term" value="C:cell leading edge"/>
    <property type="evidence" value="ECO:0000314"/>
    <property type="project" value="dictyBase"/>
</dbReference>
<dbReference type="GO" id="GO:0060187">
    <property type="term" value="C:cell pole"/>
    <property type="evidence" value="ECO:0000314"/>
    <property type="project" value="dictyBase"/>
</dbReference>
<dbReference type="GO" id="GO:0005911">
    <property type="term" value="C:cell-cell junction"/>
    <property type="evidence" value="ECO:0000314"/>
    <property type="project" value="dictyBase"/>
</dbReference>
<dbReference type="GO" id="GO:0030864">
    <property type="term" value="C:cortical actin cytoskeleton"/>
    <property type="evidence" value="ECO:0000314"/>
    <property type="project" value="dictyBase"/>
</dbReference>
<dbReference type="GO" id="GO:0032009">
    <property type="term" value="C:early phagosome"/>
    <property type="evidence" value="ECO:0000314"/>
    <property type="project" value="dictyBase"/>
</dbReference>
<dbReference type="GO" id="GO:0030139">
    <property type="term" value="C:endocytic vesicle"/>
    <property type="evidence" value="ECO:0000314"/>
    <property type="project" value="dictyBase"/>
</dbReference>
<dbReference type="GO" id="GO:0061836">
    <property type="term" value="C:intranuclear rod"/>
    <property type="evidence" value="ECO:0000314"/>
    <property type="project" value="dictyBase"/>
</dbReference>
<dbReference type="GO" id="GO:0030027">
    <property type="term" value="C:lamellipodium"/>
    <property type="evidence" value="ECO:0000314"/>
    <property type="project" value="dictyBase"/>
</dbReference>
<dbReference type="GO" id="GO:0061851">
    <property type="term" value="C:leading edge of lamellipodium"/>
    <property type="evidence" value="ECO:0000314"/>
    <property type="project" value="dictyBase"/>
</dbReference>
<dbReference type="GO" id="GO:0005811">
    <property type="term" value="C:lipid droplet"/>
    <property type="evidence" value="ECO:0007005"/>
    <property type="project" value="dictyBase"/>
</dbReference>
<dbReference type="GO" id="GO:0070685">
    <property type="term" value="C:macropinocytic cup"/>
    <property type="evidence" value="ECO:0000314"/>
    <property type="project" value="dictyBase"/>
</dbReference>
<dbReference type="GO" id="GO:0001891">
    <property type="term" value="C:phagocytic cup"/>
    <property type="evidence" value="ECO:0000314"/>
    <property type="project" value="dictyBase"/>
</dbReference>
<dbReference type="GO" id="GO:0045335">
    <property type="term" value="C:phagocytic vesicle"/>
    <property type="evidence" value="ECO:0000314"/>
    <property type="project" value="dictyBase"/>
</dbReference>
<dbReference type="GO" id="GO:0032010">
    <property type="term" value="C:phagolysosome"/>
    <property type="evidence" value="ECO:0000314"/>
    <property type="project" value="dictyBase"/>
</dbReference>
<dbReference type="GO" id="GO:0031143">
    <property type="term" value="C:pseudopodium"/>
    <property type="evidence" value="ECO:0000304"/>
    <property type="project" value="dictyBase"/>
</dbReference>
<dbReference type="GO" id="GO:0005524">
    <property type="term" value="F:ATP binding"/>
    <property type="evidence" value="ECO:0007669"/>
    <property type="project" value="UniProtKB-KW"/>
</dbReference>
<dbReference type="GO" id="GO:0016787">
    <property type="term" value="F:hydrolase activity"/>
    <property type="evidence" value="ECO:0007669"/>
    <property type="project" value="UniProtKB-KW"/>
</dbReference>
<dbReference type="GO" id="GO:0017022">
    <property type="term" value="F:myosin binding"/>
    <property type="evidence" value="ECO:0000314"/>
    <property type="project" value="dictyBase"/>
</dbReference>
<dbReference type="GO" id="GO:0005200">
    <property type="term" value="F:structural constituent of cytoskeleton"/>
    <property type="evidence" value="ECO:0000314"/>
    <property type="project" value="dictyBase"/>
</dbReference>
<dbReference type="GO" id="GO:0000902">
    <property type="term" value="P:cell morphogenesis"/>
    <property type="evidence" value="ECO:0000304"/>
    <property type="project" value="dictyBase"/>
</dbReference>
<dbReference type="GO" id="GO:0006935">
    <property type="term" value="P:chemotaxis"/>
    <property type="evidence" value="ECO:0000304"/>
    <property type="project" value="dictyBase"/>
</dbReference>
<dbReference type="GO" id="GO:0006897">
    <property type="term" value="P:endocytosis"/>
    <property type="evidence" value="ECO:0000304"/>
    <property type="project" value="dictyBase"/>
</dbReference>
<dbReference type="GO" id="GO:0006972">
    <property type="term" value="P:hyperosmotic response"/>
    <property type="evidence" value="ECO:0000270"/>
    <property type="project" value="dictyBase"/>
</dbReference>
<dbReference type="GO" id="GO:0000281">
    <property type="term" value="P:mitotic cytokinesis"/>
    <property type="evidence" value="ECO:0000304"/>
    <property type="project" value="dictyBase"/>
</dbReference>
<dbReference type="GO" id="GO:0006909">
    <property type="term" value="P:phagocytosis"/>
    <property type="evidence" value="ECO:0000270"/>
    <property type="project" value="dictyBase"/>
</dbReference>
<dbReference type="GO" id="GO:0042331">
    <property type="term" value="P:phototaxis"/>
    <property type="evidence" value="ECO:0000304"/>
    <property type="project" value="dictyBase"/>
</dbReference>
<dbReference type="GO" id="GO:0001778">
    <property type="term" value="P:plasma membrane repair"/>
    <property type="evidence" value="ECO:0000314"/>
    <property type="project" value="dictyBase"/>
</dbReference>
<dbReference type="GO" id="GO:0051591">
    <property type="term" value="P:response to cAMP"/>
    <property type="evidence" value="ECO:0000314"/>
    <property type="project" value="dictyBase"/>
</dbReference>
<dbReference type="GO" id="GO:0016192">
    <property type="term" value="P:vesicle-mediated transport"/>
    <property type="evidence" value="ECO:0000304"/>
    <property type="project" value="dictyBase"/>
</dbReference>
<dbReference type="CDD" id="cd10224">
    <property type="entry name" value="ASKHA_NBD_actin"/>
    <property type="match status" value="1"/>
</dbReference>
<dbReference type="FunFam" id="3.30.420.40:FF:000131">
    <property type="entry name" value="Actin, alpha skeletal muscle"/>
    <property type="match status" value="1"/>
</dbReference>
<dbReference type="FunFam" id="3.30.420.40:FF:000291">
    <property type="entry name" value="Actin, alpha skeletal muscle"/>
    <property type="match status" value="1"/>
</dbReference>
<dbReference type="FunFam" id="3.90.640.10:FF:000047">
    <property type="entry name" value="Actin, alpha skeletal muscle"/>
    <property type="match status" value="1"/>
</dbReference>
<dbReference type="FunFam" id="3.30.420.40:FF:000058">
    <property type="entry name" value="Putative actin-related protein 5"/>
    <property type="match status" value="1"/>
</dbReference>
<dbReference type="Gene3D" id="3.30.420.40">
    <property type="match status" value="2"/>
</dbReference>
<dbReference type="Gene3D" id="3.90.640.10">
    <property type="entry name" value="Actin, Chain A, domain 4"/>
    <property type="match status" value="1"/>
</dbReference>
<dbReference type="InterPro" id="IPR004000">
    <property type="entry name" value="Actin"/>
</dbReference>
<dbReference type="InterPro" id="IPR020902">
    <property type="entry name" value="Actin/actin-like_CS"/>
</dbReference>
<dbReference type="InterPro" id="IPR004001">
    <property type="entry name" value="Actin_CS"/>
</dbReference>
<dbReference type="InterPro" id="IPR043129">
    <property type="entry name" value="ATPase_NBD"/>
</dbReference>
<dbReference type="PANTHER" id="PTHR11937">
    <property type="entry name" value="ACTIN"/>
    <property type="match status" value="1"/>
</dbReference>
<dbReference type="Pfam" id="PF00022">
    <property type="entry name" value="Actin"/>
    <property type="match status" value="1"/>
</dbReference>
<dbReference type="PRINTS" id="PR00190">
    <property type="entry name" value="ACTIN"/>
</dbReference>
<dbReference type="SMART" id="SM00268">
    <property type="entry name" value="ACTIN"/>
    <property type="match status" value="1"/>
</dbReference>
<dbReference type="SUPFAM" id="SSF53067">
    <property type="entry name" value="Actin-like ATPase domain"/>
    <property type="match status" value="2"/>
</dbReference>
<dbReference type="PROSITE" id="PS00406">
    <property type="entry name" value="ACTINS_1"/>
    <property type="match status" value="1"/>
</dbReference>
<dbReference type="PROSITE" id="PS00432">
    <property type="entry name" value="ACTINS_2"/>
    <property type="match status" value="1"/>
</dbReference>
<dbReference type="PROSITE" id="PS01132">
    <property type="entry name" value="ACTINS_ACT_LIKE"/>
    <property type="match status" value="1"/>
</dbReference>
<protein>
    <recommendedName>
        <fullName>Major actin</fullName>
        <ecNumber evidence="1">3.6.4.-</ecNumber>
    </recommendedName>
    <alternativeName>
        <fullName>Actin A1</fullName>
    </alternativeName>
    <alternativeName>
        <fullName>Actin A12</fullName>
    </alternativeName>
    <alternativeName>
        <fullName>Actin A8</fullName>
    </alternativeName>
    <alternativeName>
        <fullName>Actin III</fullName>
    </alternativeName>
    <alternativeName>
        <fullName>Actin M6</fullName>
    </alternativeName>
    <alternativeName>
        <fullName>Actin-1</fullName>
    </alternativeName>
    <alternativeName>
        <fullName>Actin-11</fullName>
    </alternativeName>
    <alternativeName>
        <fullName>Actin-12</fullName>
    </alternativeName>
    <alternativeName>
        <fullName>Actin-13</fullName>
    </alternativeName>
    <alternativeName>
        <fullName>Actin-14</fullName>
    </alternativeName>
    <alternativeName>
        <fullName>Actin-15</fullName>
    </alternativeName>
    <alternativeName>
        <fullName>Actin-16</fullName>
    </alternativeName>
    <alternativeName>
        <fullName>Actin-19</fullName>
    </alternativeName>
    <alternativeName>
        <fullName>Actin-2</fullName>
    </alternativeName>
    <alternativeName>
        <fullName>Actin-2-sub 1</fullName>
    </alternativeName>
    <alternativeName>
        <fullName>Actin-20</fullName>
    </alternativeName>
    <alternativeName>
        <fullName>Actin-21</fullName>
    </alternativeName>
    <alternativeName>
        <fullName>Actin-3a</fullName>
    </alternativeName>
    <alternativeName>
        <fullName>Actin-4</fullName>
    </alternativeName>
    <alternativeName>
        <fullName>Actin-5</fullName>
    </alternativeName>
    <alternativeName>
        <fullName>Actin-6</fullName>
    </alternativeName>
    <alternativeName>
        <fullName>Actin-7</fullName>
    </alternativeName>
    <alternativeName>
        <fullName>Actin-8</fullName>
    </alternativeName>
    <alternativeName>
        <fullName>Actin-9</fullName>
    </alternativeName>
    <alternativeName>
        <fullName>Actin-IEL1</fullName>
    </alternativeName>
</protein>
<organism>
    <name type="scientific">Dictyostelium discoideum</name>
    <name type="common">Social amoeba</name>
    <dbReference type="NCBI Taxonomy" id="44689"/>
    <lineage>
        <taxon>Eukaryota</taxon>
        <taxon>Amoebozoa</taxon>
        <taxon>Evosea</taxon>
        <taxon>Eumycetozoa</taxon>
        <taxon>Dictyostelia</taxon>
        <taxon>Dictyosteliales</taxon>
        <taxon>Dictyosteliaceae</taxon>
        <taxon>Dictyostelium</taxon>
    </lineage>
</organism>
<feature type="initiator methionine" description="Removed" evidence="2">
    <location>
        <position position="1"/>
    </location>
</feature>
<feature type="chain" id="PRO_0000088926" description="Major actin">
    <location>
        <begin position="2"/>
        <end position="376"/>
    </location>
</feature>
<feature type="modified residue" description="Phosphotyrosine" evidence="3">
    <location>
        <position position="54"/>
    </location>
</feature>
<feature type="sequence conflict" description="In Ref. 6; CAA23479." evidence="4" ref="6">
    <original>V</original>
    <variation>L</variation>
    <location>
        <position position="31"/>
    </location>
</feature>
<feature type="sequence conflict" description="In Ref. 1; CAA27032." evidence="4" ref="1">
    <original>F</original>
    <variation>S</variation>
    <location>
        <position position="32"/>
    </location>
</feature>
<feature type="sequence conflict" description="In Ref. 6; CAA23479." evidence="4" ref="6">
    <original>H</original>
    <variation>Y</variation>
    <location>
        <position position="41"/>
    </location>
</feature>
<feature type="sequence conflict" description="In Ref. 1; CAA27032." evidence="4" ref="1">
    <original>D</original>
    <variation>E</variation>
    <location>
        <position position="57"/>
    </location>
</feature>
<feature type="sequence conflict" description="In Ref. 1; CAA27032." evidence="4" ref="1">
    <original>A</original>
    <variation>G</variation>
    <location>
        <position position="109"/>
    </location>
</feature>
<feature type="sequence conflict" description="In Ref. 1; CAA27032." evidence="4" ref="1">
    <original>V</original>
    <variation>A</variation>
    <location>
        <position position="140"/>
    </location>
</feature>
<feature type="sequence conflict" description="In Ref. 5; AAA74186." evidence="4" ref="5">
    <original>A</original>
    <variation>E</variation>
    <location>
        <position position="145"/>
    </location>
</feature>
<feature type="sequence conflict" description="In Ref. 10; AA sequence." evidence="4" ref="10">
    <original>A</original>
    <variation>Q</variation>
    <location>
        <position position="226"/>
    </location>
</feature>
<feature type="sequence conflict" description="In Ref. 5; AAA74186." evidence="4" ref="5">
    <original>M</original>
    <variation>I</variation>
    <location>
        <position position="228"/>
    </location>
</feature>
<feature type="sequence conflict" description="In Ref. 10; AA sequence." evidence="4" ref="10">
    <original>Q</original>
    <variation>A</variation>
    <location>
        <position position="229"/>
    </location>
</feature>
<feature type="sequence conflict" description="In Ref. 12; AAA51619/AAA33148/AAA33157." evidence="4" ref="12">
    <original>R</original>
    <variation>G</variation>
    <location>
        <position position="313"/>
    </location>
</feature>
<feature type="sequence conflict" description="In Ref. 12; AAA33152." evidence="4" ref="12">
    <original>W</original>
    <variation>L</variation>
    <location>
        <position position="357"/>
    </location>
</feature>
<feature type="strand" evidence="5">
    <location>
        <begin position="4"/>
        <end position="6"/>
    </location>
</feature>
<feature type="strand" evidence="9">
    <location>
        <begin position="9"/>
        <end position="13"/>
    </location>
</feature>
<feature type="strand" evidence="9">
    <location>
        <begin position="15"/>
        <end position="22"/>
    </location>
</feature>
<feature type="strand" evidence="6">
    <location>
        <begin position="25"/>
        <end position="27"/>
    </location>
</feature>
<feature type="strand" evidence="9">
    <location>
        <begin position="29"/>
        <end position="33"/>
    </location>
</feature>
<feature type="strand" evidence="9">
    <location>
        <begin position="36"/>
        <end position="40"/>
    </location>
</feature>
<feature type="strand" evidence="8">
    <location>
        <begin position="43"/>
        <end position="45"/>
    </location>
</feature>
<feature type="helix" evidence="9">
    <location>
        <begin position="57"/>
        <end position="61"/>
    </location>
</feature>
<feature type="turn" evidence="9">
    <location>
        <begin position="62"/>
        <end position="65"/>
    </location>
</feature>
<feature type="strand" evidence="9">
    <location>
        <begin position="66"/>
        <end position="69"/>
    </location>
</feature>
<feature type="strand" evidence="6">
    <location>
        <begin position="71"/>
        <end position="73"/>
    </location>
</feature>
<feature type="helix" evidence="9">
    <location>
        <begin position="80"/>
        <end position="92"/>
    </location>
</feature>
<feature type="turn" evidence="7">
    <location>
        <begin position="93"/>
        <end position="95"/>
    </location>
</feature>
<feature type="helix" evidence="9">
    <location>
        <begin position="99"/>
        <end position="101"/>
    </location>
</feature>
<feature type="strand" evidence="9">
    <location>
        <begin position="104"/>
        <end position="108"/>
    </location>
</feature>
<feature type="helix" evidence="9">
    <location>
        <begin position="114"/>
        <end position="126"/>
    </location>
</feature>
<feature type="strand" evidence="9">
    <location>
        <begin position="131"/>
        <end position="137"/>
    </location>
</feature>
<feature type="helix" evidence="9">
    <location>
        <begin position="138"/>
        <end position="145"/>
    </location>
</feature>
<feature type="strand" evidence="9">
    <location>
        <begin position="149"/>
        <end position="156"/>
    </location>
</feature>
<feature type="strand" evidence="9">
    <location>
        <begin position="161"/>
        <end position="167"/>
    </location>
</feature>
<feature type="helix" evidence="9">
    <location>
        <begin position="173"/>
        <end position="175"/>
    </location>
</feature>
<feature type="strand" evidence="9">
    <location>
        <begin position="177"/>
        <end position="180"/>
    </location>
</feature>
<feature type="helix" evidence="9">
    <location>
        <begin position="183"/>
        <end position="196"/>
    </location>
</feature>
<feature type="helix" evidence="9">
    <location>
        <begin position="204"/>
        <end position="217"/>
    </location>
</feature>
<feature type="helix" evidence="9">
    <location>
        <begin position="224"/>
        <end position="233"/>
    </location>
</feature>
<feature type="strand" evidence="7">
    <location>
        <begin position="235"/>
        <end position="237"/>
    </location>
</feature>
<feature type="strand" evidence="9">
    <location>
        <begin position="239"/>
        <end position="242"/>
    </location>
</feature>
<feature type="strand" evidence="7">
    <location>
        <begin position="244"/>
        <end position="246"/>
    </location>
</feature>
<feature type="strand" evidence="9">
    <location>
        <begin position="248"/>
        <end position="251"/>
    </location>
</feature>
<feature type="helix" evidence="9">
    <location>
        <begin position="254"/>
        <end position="263"/>
    </location>
</feature>
<feature type="helix" evidence="9">
    <location>
        <begin position="265"/>
        <end position="268"/>
    </location>
</feature>
<feature type="helix" evidence="9">
    <location>
        <begin position="275"/>
        <end position="284"/>
    </location>
</feature>
<feature type="helix" evidence="9">
    <location>
        <begin position="288"/>
        <end position="290"/>
    </location>
</feature>
<feature type="helix" evidence="9">
    <location>
        <begin position="291"/>
        <end position="295"/>
    </location>
</feature>
<feature type="strand" evidence="9">
    <location>
        <begin position="298"/>
        <end position="302"/>
    </location>
</feature>
<feature type="helix" evidence="9">
    <location>
        <begin position="303"/>
        <end position="305"/>
    </location>
</feature>
<feature type="helix" evidence="9">
    <location>
        <begin position="310"/>
        <end position="321"/>
    </location>
</feature>
<feature type="helix" evidence="9">
    <location>
        <begin position="336"/>
        <end position="338"/>
    </location>
</feature>
<feature type="helix" evidence="9">
    <location>
        <begin position="339"/>
        <end position="349"/>
    </location>
</feature>
<feature type="helix" evidence="9">
    <location>
        <begin position="353"/>
        <end position="355"/>
    </location>
</feature>
<feature type="strand" evidence="9">
    <location>
        <begin position="357"/>
        <end position="359"/>
    </location>
</feature>
<feature type="helix" evidence="9">
    <location>
        <begin position="360"/>
        <end position="366"/>
    </location>
</feature>
<feature type="helix" evidence="9">
    <location>
        <begin position="368"/>
        <end position="370"/>
    </location>
</feature>
<feature type="helix" evidence="9">
    <location>
        <begin position="371"/>
        <end position="374"/>
    </location>
</feature>
<sequence length="376" mass="41733">MDGEDVQALVIDNGSGMCKAGFAGDDAPRAVFPSIVGRPRHTGVMVGMGQKDSYVGDEAQSKRGILTLKYPIEHGIVTNWDDMEKIWHHTFYNELRVAPEEHPVLLTEAPLNPKANREKMTQIMFETFNTPAMYVAIQAVLSLYASGRTTGIVMDSGDGVSHTVPIYEGYALPHAILRLDLAGRDLTDYMMKILTERGYSFTTTAEREIVRDIKEKLAYVALDFEAEMQTAASSSALEKSYELPDGQVITIGNERFRCPEALFQPSFLGMESAGIHETTYNSIMKCDVDIRKDLYGNVVLSGGTTMFPGIADRMNKELTALAPSTMKIKIIAPPERKYSVWIGGSILASLSTFQQMWISKEEYDESGPSIVHRKCF</sequence>
<name>ACT1_DICDI</name>
<accession>P07830</accession>
<accession>P02577</accession>
<accession>P07827</accession>
<accession>Q23856</accession>
<accession>Q23875</accession>
<accession>Q23877</accession>
<accession>Q23879</accession>
<accession>Q23880</accession>
<accession>Q54H30</accession>
<accession>Q7KWV6</accession>
<accession>Q94466</accession>
<evidence type="ECO:0000250" key="1">
    <source>
        <dbReference type="UniProtKB" id="P68137"/>
    </source>
</evidence>
<evidence type="ECO:0000269" key="2">
    <source>
    </source>
</evidence>
<evidence type="ECO:0000269" key="3">
    <source>
    </source>
</evidence>
<evidence type="ECO:0000305" key="4"/>
<evidence type="ECO:0007829" key="5">
    <source>
        <dbReference type="PDB" id="1C0F"/>
    </source>
</evidence>
<evidence type="ECO:0007829" key="6">
    <source>
        <dbReference type="PDB" id="1C0G"/>
    </source>
</evidence>
<evidence type="ECO:0007829" key="7">
    <source>
        <dbReference type="PDB" id="1NLV"/>
    </source>
</evidence>
<evidence type="ECO:0007829" key="8">
    <source>
        <dbReference type="PDB" id="3A5O"/>
    </source>
</evidence>
<evidence type="ECO:0007829" key="9">
    <source>
        <dbReference type="PDB" id="3CIP"/>
    </source>
</evidence>
<gene>
    <name type="primary">act1</name>
    <name type="synonym">act1a</name>
    <name type="ORF">DDB_G0289553</name>
</gene>
<gene>
    <name type="primary">act2</name>
    <name type="synonym">act2-1</name>
    <name type="ORF">DDB_G0274133</name>
</gene>
<gene>
    <name type="primary">act4</name>
    <name type="ORF">DDB_G0289005</name>
</gene>
<gene>
    <name type="primary">act5</name>
    <name type="ORF">DDB_G0289663</name>
</gene>
<gene>
    <name type="primary">act6</name>
    <name type="ORF">DDB_G0274135</name>
</gene>
<gene>
    <name type="primary">act7</name>
    <name type="ORF">DDB_G0280545</name>
</gene>
<gene>
    <name type="primary">act8</name>
    <name type="synonym">actA8</name>
    <name type="ORF">DDB_G0269234</name>
</gene>
<gene>
    <name type="primary">act9</name>
    <name type="ORF">DDB_G0274601</name>
</gene>
<gene>
    <name type="primary">act11</name>
    <name type="ORF">DDB_G0288879</name>
</gene>
<gene>
    <name type="primary">act12</name>
    <name type="ORF">DDB_G0274129</name>
</gene>
<gene>
    <name type="primary">act13</name>
    <name type="ORF">DDB_G0274599</name>
</gene>
<gene>
    <name type="primary">act14</name>
    <name type="synonym">actB1</name>
    <name type="ORF">DDB_G0274137</name>
</gene>
<gene>
    <name type="primary">act15</name>
    <name type="synonym">actA1</name>
    <name type="ORF">DDB_G0272520</name>
</gene>
<gene>
    <name type="primary">act16</name>
    <name type="synonym">actM6</name>
    <name type="ORF">DDB_G0272248</name>
</gene>
<gene>
    <name type="primary">act19</name>
    <name type="ORF">DDB_G0274727</name>
</gene>
<gene>
    <name type="primary">act20</name>
    <name type="ORF">DDB_G0274285</name>
</gene>
<gene>
    <name type="primary">act21</name>
    <name type="ORF">DDB_G0274561</name>
</gene>